<protein>
    <recommendedName>
        <fullName evidence="1">Large ribosomal subunit protein bL33</fullName>
    </recommendedName>
    <alternativeName>
        <fullName evidence="2">50S ribosomal protein L33</fullName>
    </alternativeName>
</protein>
<sequence length="49" mass="5992">MRVKVTLACTECKQRNYNTMKNKKNDPNRIEMKKYCKFCKTHTLHRETK</sequence>
<feature type="chain" id="PRO_0000356439" description="Large ribosomal subunit protein bL33">
    <location>
        <begin position="1"/>
        <end position="49"/>
    </location>
</feature>
<name>RL33_CLOP1</name>
<keyword id="KW-0687">Ribonucleoprotein</keyword>
<keyword id="KW-0689">Ribosomal protein</keyword>
<proteinExistence type="inferred from homology"/>
<gene>
    <name evidence="1" type="primary">rpmG</name>
    <name type="ordered locus">CPF_2729</name>
</gene>
<organism>
    <name type="scientific">Clostridium perfringens (strain ATCC 13124 / DSM 756 / JCM 1290 / NCIMB 6125 / NCTC 8237 / Type A)</name>
    <dbReference type="NCBI Taxonomy" id="195103"/>
    <lineage>
        <taxon>Bacteria</taxon>
        <taxon>Bacillati</taxon>
        <taxon>Bacillota</taxon>
        <taxon>Clostridia</taxon>
        <taxon>Eubacteriales</taxon>
        <taxon>Clostridiaceae</taxon>
        <taxon>Clostridium</taxon>
    </lineage>
</organism>
<reference key="1">
    <citation type="journal article" date="2006" name="Genome Res.">
        <title>Skewed genomic variability in strains of the toxigenic bacterial pathogen, Clostridium perfringens.</title>
        <authorList>
            <person name="Myers G.S.A."/>
            <person name="Rasko D.A."/>
            <person name="Cheung J.K."/>
            <person name="Ravel J."/>
            <person name="Seshadri R."/>
            <person name="DeBoy R.T."/>
            <person name="Ren Q."/>
            <person name="Varga J."/>
            <person name="Awad M.M."/>
            <person name="Brinkac L.M."/>
            <person name="Daugherty S.C."/>
            <person name="Haft D.H."/>
            <person name="Dodson R.J."/>
            <person name="Madupu R."/>
            <person name="Nelson W.C."/>
            <person name="Rosovitz M.J."/>
            <person name="Sullivan S.A."/>
            <person name="Khouri H."/>
            <person name="Dimitrov G.I."/>
            <person name="Watkins K.L."/>
            <person name="Mulligan S."/>
            <person name="Benton J."/>
            <person name="Radune D."/>
            <person name="Fisher D.J."/>
            <person name="Atkins H.S."/>
            <person name="Hiscox T."/>
            <person name="Jost B.H."/>
            <person name="Billington S.J."/>
            <person name="Songer J.G."/>
            <person name="McClane B.A."/>
            <person name="Titball R.W."/>
            <person name="Rood J.I."/>
            <person name="Melville S.B."/>
            <person name="Paulsen I.T."/>
        </authorList>
    </citation>
    <scope>NUCLEOTIDE SEQUENCE [LARGE SCALE GENOMIC DNA]</scope>
    <source>
        <strain>ATCC 13124 / DSM 756 / JCM 1290 / NCIMB 6125 / NCTC 8237 / S 107 / Type A</strain>
    </source>
</reference>
<comment type="similarity">
    <text evidence="1">Belongs to the bacterial ribosomal protein bL33 family.</text>
</comment>
<dbReference type="EMBL" id="CP000246">
    <property type="protein sequence ID" value="ABG84430.1"/>
    <property type="molecule type" value="Genomic_DNA"/>
</dbReference>
<dbReference type="RefSeq" id="WP_003482374.1">
    <property type="nucleotide sequence ID" value="NC_008261.1"/>
</dbReference>
<dbReference type="SMR" id="Q0TMN1"/>
<dbReference type="STRING" id="195103.CPF_2729"/>
<dbReference type="PaxDb" id="195103-CPF_2729"/>
<dbReference type="GeneID" id="93000994"/>
<dbReference type="KEGG" id="cpf:CPF_2729"/>
<dbReference type="eggNOG" id="COG0267">
    <property type="taxonomic scope" value="Bacteria"/>
</dbReference>
<dbReference type="HOGENOM" id="CLU_190949_0_2_9"/>
<dbReference type="Proteomes" id="UP000001823">
    <property type="component" value="Chromosome"/>
</dbReference>
<dbReference type="GO" id="GO:0005737">
    <property type="term" value="C:cytoplasm"/>
    <property type="evidence" value="ECO:0007669"/>
    <property type="project" value="UniProtKB-ARBA"/>
</dbReference>
<dbReference type="GO" id="GO:1990904">
    <property type="term" value="C:ribonucleoprotein complex"/>
    <property type="evidence" value="ECO:0007669"/>
    <property type="project" value="UniProtKB-KW"/>
</dbReference>
<dbReference type="GO" id="GO:0005840">
    <property type="term" value="C:ribosome"/>
    <property type="evidence" value="ECO:0007669"/>
    <property type="project" value="UniProtKB-KW"/>
</dbReference>
<dbReference type="GO" id="GO:0003735">
    <property type="term" value="F:structural constituent of ribosome"/>
    <property type="evidence" value="ECO:0007669"/>
    <property type="project" value="InterPro"/>
</dbReference>
<dbReference type="GO" id="GO:0006412">
    <property type="term" value="P:translation"/>
    <property type="evidence" value="ECO:0007669"/>
    <property type="project" value="UniProtKB-UniRule"/>
</dbReference>
<dbReference type="Gene3D" id="2.20.28.120">
    <property type="entry name" value="Ribosomal protein L33"/>
    <property type="match status" value="1"/>
</dbReference>
<dbReference type="HAMAP" id="MF_00294">
    <property type="entry name" value="Ribosomal_bL33"/>
    <property type="match status" value="1"/>
</dbReference>
<dbReference type="InterPro" id="IPR001705">
    <property type="entry name" value="Ribosomal_bL33"/>
</dbReference>
<dbReference type="InterPro" id="IPR018264">
    <property type="entry name" value="Ribosomal_bL33_CS"/>
</dbReference>
<dbReference type="InterPro" id="IPR038584">
    <property type="entry name" value="Ribosomal_bL33_sf"/>
</dbReference>
<dbReference type="InterPro" id="IPR011332">
    <property type="entry name" value="Ribosomal_zn-bd"/>
</dbReference>
<dbReference type="NCBIfam" id="NF001764">
    <property type="entry name" value="PRK00504.1"/>
    <property type="match status" value="1"/>
</dbReference>
<dbReference type="NCBIfam" id="NF001860">
    <property type="entry name" value="PRK00595.1"/>
    <property type="match status" value="1"/>
</dbReference>
<dbReference type="NCBIfam" id="TIGR01023">
    <property type="entry name" value="rpmG_bact"/>
    <property type="match status" value="1"/>
</dbReference>
<dbReference type="PANTHER" id="PTHR43168">
    <property type="entry name" value="50S RIBOSOMAL PROTEIN L33, CHLOROPLASTIC"/>
    <property type="match status" value="1"/>
</dbReference>
<dbReference type="PANTHER" id="PTHR43168:SF2">
    <property type="entry name" value="LARGE RIBOSOMAL SUBUNIT PROTEIN BL33C"/>
    <property type="match status" value="1"/>
</dbReference>
<dbReference type="Pfam" id="PF00471">
    <property type="entry name" value="Ribosomal_L33"/>
    <property type="match status" value="1"/>
</dbReference>
<dbReference type="SUPFAM" id="SSF57829">
    <property type="entry name" value="Zn-binding ribosomal proteins"/>
    <property type="match status" value="1"/>
</dbReference>
<dbReference type="PROSITE" id="PS00582">
    <property type="entry name" value="RIBOSOMAL_L33"/>
    <property type="match status" value="1"/>
</dbReference>
<evidence type="ECO:0000255" key="1">
    <source>
        <dbReference type="HAMAP-Rule" id="MF_00294"/>
    </source>
</evidence>
<evidence type="ECO:0000305" key="2"/>
<accession>Q0TMN1</accession>